<protein>
    <recommendedName>
        <fullName evidence="1">NADPH--cytochrome P450 reductase 2</fullName>
        <shortName evidence="1">CPR 2</shortName>
        <shortName evidence="1">P450R 2</shortName>
        <ecNumber evidence="1">1.6.2.4</ecNumber>
    </recommendedName>
</protein>
<organism>
    <name type="scientific">Arabidopsis thaliana</name>
    <name type="common">Mouse-ear cress</name>
    <dbReference type="NCBI Taxonomy" id="3702"/>
    <lineage>
        <taxon>Eukaryota</taxon>
        <taxon>Viridiplantae</taxon>
        <taxon>Streptophyta</taxon>
        <taxon>Embryophyta</taxon>
        <taxon>Tracheophyta</taxon>
        <taxon>Spermatophyta</taxon>
        <taxon>Magnoliopsida</taxon>
        <taxon>eudicotyledons</taxon>
        <taxon>Gunneridae</taxon>
        <taxon>Pentapetalae</taxon>
        <taxon>rosids</taxon>
        <taxon>malvids</taxon>
        <taxon>Brassicales</taxon>
        <taxon>Brassicaceae</taxon>
        <taxon>Camelineae</taxon>
        <taxon>Arabidopsis</taxon>
    </lineage>
</organism>
<dbReference type="EC" id="1.6.2.4" evidence="1"/>
<dbReference type="EMBL" id="X66017">
    <property type="protein sequence ID" value="CAA46815.1"/>
    <property type="molecule type" value="mRNA"/>
</dbReference>
<dbReference type="EMBL" id="AL109796">
    <property type="protein sequence ID" value="CAB52465.1"/>
    <property type="molecule type" value="Genomic_DNA"/>
</dbReference>
<dbReference type="EMBL" id="AL161576">
    <property type="protein sequence ID" value="CAB81014.1"/>
    <property type="molecule type" value="Genomic_DNA"/>
</dbReference>
<dbReference type="EMBL" id="CP002687">
    <property type="protein sequence ID" value="AEE85737.1"/>
    <property type="molecule type" value="Genomic_DNA"/>
</dbReference>
<dbReference type="EMBL" id="CP002687">
    <property type="protein sequence ID" value="AEE85738.1"/>
    <property type="molecule type" value="Genomic_DNA"/>
</dbReference>
<dbReference type="EMBL" id="AF325101">
    <property type="protein sequence ID" value="AAK17169.1"/>
    <property type="molecule type" value="mRNA"/>
</dbReference>
<dbReference type="PIR" id="S21531">
    <property type="entry name" value="S21531"/>
</dbReference>
<dbReference type="PIR" id="T14081">
    <property type="entry name" value="T14081"/>
</dbReference>
<dbReference type="RefSeq" id="NP_194750.1">
    <molecule id="Q9SUM3-1"/>
    <property type="nucleotide sequence ID" value="NM_119167.4"/>
</dbReference>
<dbReference type="RefSeq" id="NP_849472.2">
    <molecule id="Q9SUM3-2"/>
    <property type="nucleotide sequence ID" value="NM_179141.2"/>
</dbReference>
<dbReference type="PDB" id="5GXU">
    <property type="method" value="X-ray"/>
    <property type="resolution" value="2.30 A"/>
    <property type="chains" value="A/B=73-711"/>
</dbReference>
<dbReference type="PDBsum" id="5GXU"/>
<dbReference type="SMR" id="Q9SUM3"/>
<dbReference type="FunCoup" id="Q9SUM3">
    <property type="interactions" value="3972"/>
</dbReference>
<dbReference type="STRING" id="3702.Q9SUM3"/>
<dbReference type="iPTMnet" id="Q9SUM3"/>
<dbReference type="PaxDb" id="3702-AT4G30210.1"/>
<dbReference type="ProteomicsDB" id="251241">
    <molecule id="Q9SUM3-1"/>
</dbReference>
<dbReference type="EnsemblPlants" id="AT4G30210.1">
    <molecule id="Q9SUM3-2"/>
    <property type="protein sequence ID" value="AT4G30210.1"/>
    <property type="gene ID" value="AT4G30210"/>
</dbReference>
<dbReference type="EnsemblPlants" id="AT4G30210.2">
    <molecule id="Q9SUM3-1"/>
    <property type="protein sequence ID" value="AT4G30210.2"/>
    <property type="gene ID" value="AT4G30210"/>
</dbReference>
<dbReference type="GeneID" id="829144"/>
<dbReference type="Gramene" id="AT4G30210.1">
    <molecule id="Q9SUM3-2"/>
    <property type="protein sequence ID" value="AT4G30210.1"/>
    <property type="gene ID" value="AT4G30210"/>
</dbReference>
<dbReference type="Gramene" id="AT4G30210.2">
    <molecule id="Q9SUM3-1"/>
    <property type="protein sequence ID" value="AT4G30210.2"/>
    <property type="gene ID" value="AT4G30210"/>
</dbReference>
<dbReference type="KEGG" id="ath:AT4G30210"/>
<dbReference type="Araport" id="AT4G30210"/>
<dbReference type="TAIR" id="AT4G30210">
    <property type="gene designation" value="ATR2"/>
</dbReference>
<dbReference type="eggNOG" id="KOG1158">
    <property type="taxonomic scope" value="Eukaryota"/>
</dbReference>
<dbReference type="HOGENOM" id="CLU_001570_17_3_1"/>
<dbReference type="InParanoid" id="Q9SUM3"/>
<dbReference type="OrthoDB" id="1856718at2759"/>
<dbReference type="PhylomeDB" id="Q9SUM3"/>
<dbReference type="BioCyc" id="ARA:AT4G30210-MONOMER"/>
<dbReference type="BioCyc" id="MetaCyc:AT4G30210-MONOMER"/>
<dbReference type="SABIO-RK" id="Q9SUM3"/>
<dbReference type="PRO" id="PR:Q9SUM3"/>
<dbReference type="Proteomes" id="UP000006548">
    <property type="component" value="Chromosome 4"/>
</dbReference>
<dbReference type="ExpressionAtlas" id="Q9SUM3">
    <property type="expression patterns" value="baseline and differential"/>
</dbReference>
<dbReference type="GO" id="GO:0009507">
    <property type="term" value="C:chloroplast"/>
    <property type="evidence" value="ECO:0000250"/>
    <property type="project" value="TAIR"/>
</dbReference>
<dbReference type="GO" id="GO:0005783">
    <property type="term" value="C:endoplasmic reticulum"/>
    <property type="evidence" value="ECO:0000314"/>
    <property type="project" value="UniProtKB"/>
</dbReference>
<dbReference type="GO" id="GO:0005789">
    <property type="term" value="C:endoplasmic reticulum membrane"/>
    <property type="evidence" value="ECO:0007669"/>
    <property type="project" value="UniProtKB-SubCell"/>
</dbReference>
<dbReference type="GO" id="GO:0005886">
    <property type="term" value="C:plasma membrane"/>
    <property type="evidence" value="ECO:0007005"/>
    <property type="project" value="TAIR"/>
</dbReference>
<dbReference type="GO" id="GO:0050660">
    <property type="term" value="F:flavin adenine dinucleotide binding"/>
    <property type="evidence" value="ECO:0007669"/>
    <property type="project" value="UniProtKB-UniRule"/>
</dbReference>
<dbReference type="GO" id="GO:0010181">
    <property type="term" value="F:FMN binding"/>
    <property type="evidence" value="ECO:0007669"/>
    <property type="project" value="UniProtKB-UniRule"/>
</dbReference>
<dbReference type="GO" id="GO:0050661">
    <property type="term" value="F:NADP binding"/>
    <property type="evidence" value="ECO:0007669"/>
    <property type="project" value="UniProtKB-UniRule"/>
</dbReference>
<dbReference type="GO" id="GO:0003958">
    <property type="term" value="F:NADPH-hemoprotein reductase activity"/>
    <property type="evidence" value="ECO:0000314"/>
    <property type="project" value="UniProtKB"/>
</dbReference>
<dbReference type="GO" id="GO:0009698">
    <property type="term" value="P:phenylpropanoid metabolic process"/>
    <property type="evidence" value="ECO:0000314"/>
    <property type="project" value="UniProtKB"/>
</dbReference>
<dbReference type="CDD" id="cd06204">
    <property type="entry name" value="CYPOR"/>
    <property type="match status" value="1"/>
</dbReference>
<dbReference type="DisProt" id="DP02644"/>
<dbReference type="FunFam" id="1.20.990.10:FF:000003">
    <property type="entry name" value="NADPH--cytochrome P450 reductase"/>
    <property type="match status" value="1"/>
</dbReference>
<dbReference type="FunFam" id="3.40.50.360:FF:000023">
    <property type="entry name" value="NADPH--cytochrome P450 reductase"/>
    <property type="match status" value="1"/>
</dbReference>
<dbReference type="FunFam" id="3.40.50.80:FF:000001">
    <property type="entry name" value="NADPH--cytochrome P450 reductase 1"/>
    <property type="match status" value="1"/>
</dbReference>
<dbReference type="Gene3D" id="3.40.50.360">
    <property type="match status" value="1"/>
</dbReference>
<dbReference type="Gene3D" id="1.20.990.10">
    <property type="entry name" value="NADPH-cytochrome p450 Reductase, Chain A, domain 3"/>
    <property type="match status" value="1"/>
</dbReference>
<dbReference type="Gene3D" id="3.40.50.80">
    <property type="entry name" value="Nucleotide-binding domain of ferredoxin-NADP reductase (FNR) module"/>
    <property type="match status" value="1"/>
</dbReference>
<dbReference type="Gene3D" id="2.40.30.10">
    <property type="entry name" value="Translation factors"/>
    <property type="match status" value="1"/>
</dbReference>
<dbReference type="HAMAP" id="MF_03212">
    <property type="entry name" value="NCPR"/>
    <property type="match status" value="1"/>
</dbReference>
<dbReference type="InterPro" id="IPR003097">
    <property type="entry name" value="CysJ-like_FAD-binding"/>
</dbReference>
<dbReference type="InterPro" id="IPR017927">
    <property type="entry name" value="FAD-bd_FR_type"/>
</dbReference>
<dbReference type="InterPro" id="IPR001094">
    <property type="entry name" value="Flavdoxin-like"/>
</dbReference>
<dbReference type="InterPro" id="IPR008254">
    <property type="entry name" value="Flavodoxin/NO_synth"/>
</dbReference>
<dbReference type="InterPro" id="IPR001709">
    <property type="entry name" value="Flavoprot_Pyr_Nucl_cyt_Rdtase"/>
</dbReference>
<dbReference type="InterPro" id="IPR029039">
    <property type="entry name" value="Flavoprotein-like_sf"/>
</dbReference>
<dbReference type="InterPro" id="IPR039261">
    <property type="entry name" value="FNR_nucleotide-bd"/>
</dbReference>
<dbReference type="InterPro" id="IPR023173">
    <property type="entry name" value="NADPH_Cyt_P450_Rdtase_alpha"/>
</dbReference>
<dbReference type="InterPro" id="IPR001433">
    <property type="entry name" value="OxRdtase_FAD/NAD-bd"/>
</dbReference>
<dbReference type="InterPro" id="IPR023208">
    <property type="entry name" value="P450R"/>
</dbReference>
<dbReference type="InterPro" id="IPR017938">
    <property type="entry name" value="Riboflavin_synthase-like_b-brl"/>
</dbReference>
<dbReference type="PANTHER" id="PTHR19384:SF17">
    <property type="entry name" value="NADPH--CYTOCHROME P450 REDUCTASE"/>
    <property type="match status" value="1"/>
</dbReference>
<dbReference type="PANTHER" id="PTHR19384">
    <property type="entry name" value="NITRIC OXIDE SYNTHASE-RELATED"/>
    <property type="match status" value="1"/>
</dbReference>
<dbReference type="Pfam" id="PF00667">
    <property type="entry name" value="FAD_binding_1"/>
    <property type="match status" value="1"/>
</dbReference>
<dbReference type="Pfam" id="PF00258">
    <property type="entry name" value="Flavodoxin_1"/>
    <property type="match status" value="1"/>
</dbReference>
<dbReference type="Pfam" id="PF00175">
    <property type="entry name" value="NAD_binding_1"/>
    <property type="match status" value="1"/>
</dbReference>
<dbReference type="PIRSF" id="PIRSF000208">
    <property type="entry name" value="P450R"/>
    <property type="match status" value="1"/>
</dbReference>
<dbReference type="PRINTS" id="PR00369">
    <property type="entry name" value="FLAVODOXIN"/>
</dbReference>
<dbReference type="PRINTS" id="PR00371">
    <property type="entry name" value="FPNCR"/>
</dbReference>
<dbReference type="SUPFAM" id="SSF52343">
    <property type="entry name" value="Ferredoxin reductase-like, C-terminal NADP-linked domain"/>
    <property type="match status" value="1"/>
</dbReference>
<dbReference type="SUPFAM" id="SSF52218">
    <property type="entry name" value="Flavoproteins"/>
    <property type="match status" value="1"/>
</dbReference>
<dbReference type="SUPFAM" id="SSF63380">
    <property type="entry name" value="Riboflavin synthase domain-like"/>
    <property type="match status" value="1"/>
</dbReference>
<dbReference type="PROSITE" id="PS51384">
    <property type="entry name" value="FAD_FR"/>
    <property type="match status" value="1"/>
</dbReference>
<dbReference type="PROSITE" id="PS50902">
    <property type="entry name" value="FLAVODOXIN_LIKE"/>
    <property type="match status" value="1"/>
</dbReference>
<feature type="chain" id="PRO_0000416840" description="NADPH--cytochrome P450 reductase 2">
    <location>
        <begin position="1"/>
        <end position="711"/>
    </location>
</feature>
<feature type="topological domain" description="Lumenal" evidence="1">
    <location>
        <begin position="1"/>
        <end position="51"/>
    </location>
</feature>
<feature type="transmembrane region" description="Helical" evidence="1">
    <location>
        <begin position="52"/>
        <end position="72"/>
    </location>
</feature>
<feature type="topological domain" description="Cytoplasmic" evidence="1">
    <location>
        <begin position="73"/>
        <end position="711"/>
    </location>
</feature>
<feature type="domain" description="Flavodoxin-like" evidence="1">
    <location>
        <begin position="105"/>
        <end position="255"/>
    </location>
</feature>
<feature type="domain" description="FAD-binding FR-type" evidence="1">
    <location>
        <begin position="310"/>
        <end position="556"/>
    </location>
</feature>
<feature type="binding site" evidence="1">
    <location>
        <begin position="111"/>
        <end position="116"/>
    </location>
    <ligand>
        <name>FMN</name>
        <dbReference type="ChEBI" id="CHEBI:58210"/>
    </ligand>
</feature>
<feature type="binding site" evidence="1">
    <location>
        <begin position="166"/>
        <end position="169"/>
    </location>
    <ligand>
        <name>FMN</name>
        <dbReference type="ChEBI" id="CHEBI:58210"/>
    </ligand>
</feature>
<feature type="binding site" evidence="1">
    <location>
        <begin position="204"/>
        <end position="213"/>
    </location>
    <ligand>
        <name>FMN</name>
        <dbReference type="ChEBI" id="CHEBI:58210"/>
    </ligand>
</feature>
<feature type="binding site" evidence="1">
    <location>
        <position position="239"/>
    </location>
    <ligand>
        <name>FMN</name>
        <dbReference type="ChEBI" id="CHEBI:58210"/>
    </ligand>
</feature>
<feature type="binding site" evidence="1">
    <location>
        <position position="330"/>
    </location>
    <ligand>
        <name>NADP(+)</name>
        <dbReference type="ChEBI" id="CHEBI:58349"/>
    </ligand>
</feature>
<feature type="binding site" evidence="1">
    <location>
        <begin position="489"/>
        <end position="492"/>
    </location>
    <ligand>
        <name>FAD</name>
        <dbReference type="ChEBI" id="CHEBI:57692"/>
    </ligand>
</feature>
<feature type="binding site" evidence="1">
    <location>
        <begin position="507"/>
        <end position="509"/>
    </location>
    <ligand>
        <name>FAD</name>
        <dbReference type="ChEBI" id="CHEBI:57692"/>
    </ligand>
</feature>
<feature type="binding site" evidence="1">
    <location>
        <begin position="523"/>
        <end position="526"/>
    </location>
    <ligand>
        <name>FAD</name>
        <dbReference type="ChEBI" id="CHEBI:57692"/>
    </ligand>
</feature>
<feature type="binding site" evidence="1">
    <location>
        <position position="570"/>
    </location>
    <ligand>
        <name>NADP(+)</name>
        <dbReference type="ChEBI" id="CHEBI:58349"/>
    </ligand>
</feature>
<feature type="binding site" evidence="1">
    <location>
        <begin position="631"/>
        <end position="632"/>
    </location>
    <ligand>
        <name>NADP(+)</name>
        <dbReference type="ChEBI" id="CHEBI:58349"/>
    </ligand>
</feature>
<feature type="binding site" evidence="1">
    <location>
        <begin position="637"/>
        <end position="641"/>
    </location>
    <ligand>
        <name>NADP(+)</name>
        <dbReference type="ChEBI" id="CHEBI:58349"/>
    </ligand>
</feature>
<feature type="binding site" evidence="1">
    <location>
        <position position="673"/>
    </location>
    <ligand>
        <name>NADP(+)</name>
        <dbReference type="ChEBI" id="CHEBI:58349"/>
    </ligand>
</feature>
<feature type="binding site" evidence="1">
    <location>
        <position position="711"/>
    </location>
    <ligand>
        <name>FAD</name>
        <dbReference type="ChEBI" id="CHEBI:57692"/>
    </ligand>
</feature>
<feature type="splice variant" id="VSP_042906" description="In isoform 2." evidence="7">
    <original>K</original>
    <variation>KV</variation>
    <location>
        <position position="447"/>
    </location>
</feature>
<feature type="sequence conflict" description="In Ref. 1; CAA46815." evidence="7" ref="1">
    <original>NM</original>
    <variation>TL</variation>
    <location>
        <begin position="297"/>
        <end position="298"/>
    </location>
</feature>
<feature type="sequence conflict" description="In Ref. 1; CAA46815." evidence="7" ref="1">
    <original>YET</original>
    <variation>MKL</variation>
    <location>
        <begin position="346"/>
        <end position="348"/>
    </location>
</feature>
<feature type="sequence conflict" description="In Ref. 1; CAA46815." evidence="7" ref="1">
    <original>NCSSA</original>
    <variation>KLFLGR</variation>
    <location>
        <begin position="540"/>
        <end position="544"/>
    </location>
</feature>
<feature type="strand" evidence="8">
    <location>
        <begin position="104"/>
        <end position="110"/>
    </location>
</feature>
<feature type="strand" evidence="8">
    <location>
        <begin position="112"/>
        <end position="114"/>
    </location>
</feature>
<feature type="helix" evidence="8">
    <location>
        <begin position="115"/>
        <end position="130"/>
    </location>
</feature>
<feature type="turn" evidence="8">
    <location>
        <begin position="131"/>
        <end position="133"/>
    </location>
</feature>
<feature type="strand" evidence="8">
    <location>
        <begin position="134"/>
        <end position="140"/>
    </location>
</feature>
<feature type="helix" evidence="8">
    <location>
        <begin position="141"/>
        <end position="144"/>
    </location>
</feature>
<feature type="helix" evidence="8">
    <location>
        <begin position="148"/>
        <end position="155"/>
    </location>
</feature>
<feature type="strand" evidence="8">
    <location>
        <begin position="159"/>
        <end position="168"/>
    </location>
</feature>
<feature type="helix" evidence="8">
    <location>
        <begin position="169"/>
        <end position="171"/>
    </location>
</feature>
<feature type="turn" evidence="8">
    <location>
        <begin position="175"/>
        <end position="177"/>
    </location>
</feature>
<feature type="helix" evidence="8">
    <location>
        <begin position="178"/>
        <end position="185"/>
    </location>
</feature>
<feature type="strand" evidence="8">
    <location>
        <begin position="198"/>
        <end position="205"/>
    </location>
</feature>
<feature type="strand" evidence="8">
    <location>
        <begin position="209"/>
        <end position="211"/>
    </location>
</feature>
<feature type="helix" evidence="8">
    <location>
        <begin position="214"/>
        <end position="225"/>
    </location>
</feature>
<feature type="strand" evidence="8">
    <location>
        <begin position="229"/>
        <end position="232"/>
    </location>
</feature>
<feature type="strand" evidence="8">
    <location>
        <begin position="235"/>
        <end position="238"/>
    </location>
</feature>
<feature type="helix" evidence="8">
    <location>
        <begin position="243"/>
        <end position="259"/>
    </location>
</feature>
<feature type="strand" evidence="8">
    <location>
        <begin position="309"/>
        <end position="311"/>
    </location>
</feature>
<feature type="strand" evidence="8">
    <location>
        <begin position="313"/>
        <end position="322"/>
    </location>
</feature>
<feature type="strand" evidence="8">
    <location>
        <begin position="332"/>
        <end position="338"/>
    </location>
</feature>
<feature type="strand" evidence="8">
    <location>
        <begin position="351"/>
        <end position="354"/>
    </location>
</feature>
<feature type="helix" evidence="8">
    <location>
        <begin position="360"/>
        <end position="370"/>
    </location>
</feature>
<feature type="helix" evidence="8">
    <location>
        <begin position="403"/>
        <end position="409"/>
    </location>
</feature>
<feature type="helix" evidence="8">
    <location>
        <begin position="419"/>
        <end position="426"/>
    </location>
</feature>
<feature type="strand" evidence="8">
    <location>
        <begin position="429"/>
        <end position="431"/>
    </location>
</feature>
<feature type="helix" evidence="8">
    <location>
        <begin position="432"/>
        <end position="442"/>
    </location>
</feature>
<feature type="helix" evidence="8">
    <location>
        <begin position="444"/>
        <end position="446"/>
    </location>
</feature>
<feature type="helix" evidence="8">
    <location>
        <begin position="447"/>
        <end position="453"/>
    </location>
</feature>
<feature type="turn" evidence="8">
    <location>
        <begin position="454"/>
        <end position="458"/>
    </location>
</feature>
<feature type="helix" evidence="8">
    <location>
        <begin position="461"/>
        <end position="467"/>
    </location>
</feature>
<feature type="helix" evidence="8">
    <location>
        <begin position="475"/>
        <end position="478"/>
    </location>
</feature>
<feature type="turn" evidence="8">
    <location>
        <begin position="479"/>
        <end position="482"/>
    </location>
</feature>
<feature type="strand" evidence="8">
    <location>
        <begin position="489"/>
        <end position="492"/>
    </location>
</feature>
<feature type="turn" evidence="8">
    <location>
        <begin position="497"/>
        <end position="499"/>
    </location>
</feature>
<feature type="strand" evidence="8">
    <location>
        <begin position="501"/>
        <end position="509"/>
    </location>
</feature>
<feature type="strand" evidence="8">
    <location>
        <begin position="512"/>
        <end position="514"/>
    </location>
</feature>
<feature type="strand" evidence="8">
    <location>
        <begin position="520"/>
        <end position="522"/>
    </location>
</feature>
<feature type="helix" evidence="8">
    <location>
        <begin position="524"/>
        <end position="531"/>
    </location>
</feature>
<feature type="strand" evidence="8">
    <location>
        <begin position="543"/>
        <end position="549"/>
    </location>
</feature>
<feature type="strand" evidence="8">
    <location>
        <begin position="563"/>
        <end position="566"/>
    </location>
</feature>
<feature type="helix" evidence="8">
    <location>
        <begin position="569"/>
        <end position="572"/>
    </location>
</feature>
<feature type="helix" evidence="8">
    <location>
        <begin position="573"/>
        <end position="586"/>
    </location>
</feature>
<feature type="turn" evidence="8">
    <location>
        <begin position="587"/>
        <end position="589"/>
    </location>
</feature>
<feature type="strand" evidence="8">
    <location>
        <begin position="595"/>
        <end position="602"/>
    </location>
</feature>
<feature type="turn" evidence="8">
    <location>
        <begin position="604"/>
        <end position="606"/>
    </location>
</feature>
<feature type="helix" evidence="8">
    <location>
        <begin position="611"/>
        <end position="619"/>
    </location>
</feature>
<feature type="strand" evidence="8">
    <location>
        <begin position="624"/>
        <end position="635"/>
    </location>
</feature>
<feature type="helix" evidence="8">
    <location>
        <begin position="640"/>
        <end position="646"/>
    </location>
</feature>
<feature type="helix" evidence="8">
    <location>
        <begin position="648"/>
        <end position="656"/>
    </location>
</feature>
<feature type="strand" evidence="8">
    <location>
        <begin position="660"/>
        <end position="665"/>
    </location>
</feature>
<feature type="turn" evidence="8">
    <location>
        <begin position="667"/>
        <end position="669"/>
    </location>
</feature>
<feature type="helix" evidence="8">
    <location>
        <begin position="670"/>
        <end position="686"/>
    </location>
</feature>
<feature type="helix" evidence="8">
    <location>
        <begin position="690"/>
        <end position="703"/>
    </location>
</feature>
<feature type="strand" evidence="8">
    <location>
        <begin position="705"/>
        <end position="710"/>
    </location>
</feature>
<evidence type="ECO:0000255" key="1">
    <source>
        <dbReference type="HAMAP-Rule" id="MF_03212"/>
    </source>
</evidence>
<evidence type="ECO:0000269" key="2">
    <source>
    </source>
</evidence>
<evidence type="ECO:0000269" key="3">
    <source>
    </source>
</evidence>
<evidence type="ECO:0000269" key="4">
    <source>
    </source>
</evidence>
<evidence type="ECO:0000269" key="5">
    <source>
    </source>
</evidence>
<evidence type="ECO:0000269" key="6">
    <source>
    </source>
</evidence>
<evidence type="ECO:0000305" key="7"/>
<evidence type="ECO:0007829" key="8">
    <source>
        <dbReference type="PDB" id="5GXU"/>
    </source>
</evidence>
<gene>
    <name type="primary">ATR2</name>
    <name type="synonym">AR2</name>
    <name type="ordered locus">At4g30210</name>
    <name type="ORF">F9N11.60</name>
</gene>
<name>NCPR2_ARATH</name>
<comment type="function">
    <text evidence="1 2 3 4 5 6">This enzyme is required for electron transfer from NADP to cytochrome P450 in microsomes. It can also provide electron transfer to heme oxygenase and cytochrome B5. Reduces a variety of substrates in vitro, such as cytochrome c, feericyanide and dichloroindophenol.</text>
</comment>
<comment type="catalytic activity">
    <reaction evidence="1">
        <text>2 oxidized [cytochrome P450] + NADPH = 2 reduced [cytochrome P450] + NADP(+) + H(+)</text>
        <dbReference type="Rhea" id="RHEA:24040"/>
        <dbReference type="Rhea" id="RHEA-COMP:14627"/>
        <dbReference type="Rhea" id="RHEA-COMP:14628"/>
        <dbReference type="ChEBI" id="CHEBI:15378"/>
        <dbReference type="ChEBI" id="CHEBI:55376"/>
        <dbReference type="ChEBI" id="CHEBI:57783"/>
        <dbReference type="ChEBI" id="CHEBI:58349"/>
        <dbReference type="ChEBI" id="CHEBI:60344"/>
        <dbReference type="EC" id="1.6.2.4"/>
    </reaction>
</comment>
<comment type="cofactor">
    <cofactor evidence="1 6">
        <name>FAD</name>
        <dbReference type="ChEBI" id="CHEBI:57692"/>
    </cofactor>
    <text evidence="1">Binds 1 FAD per monomer.</text>
</comment>
<comment type="cofactor">
    <cofactor evidence="1 6">
        <name>FMN</name>
        <dbReference type="ChEBI" id="CHEBI:58210"/>
    </cofactor>
    <text evidence="1">Binds 1 FMN per monomer.</text>
</comment>
<comment type="biophysicochemical properties">
    <kinetics>
        <KM evidence="2 4 5 6">23 uM for NADPH (at pH 7.7 and 28 degrees Celsius)</KM>
        <KM evidence="2 4 5 6">2 uM for NADPH (at pH 7.25 and 25 degrees Celsius)</KM>
        <KM evidence="2 4 5 6">15 uM for cytochrome c (at pH 7.7 and 30 degrees Celsius)</KM>
        <KM evidence="2 4 5 6">16 uM for cytochrome c (at pH 7.0 and 25 degrees Celsius)</KM>
        <KM evidence="2 4 5 6">22.5 uM for cytochrome c (at pH 7.7 and 28 degrees Celsius)</KM>
    </kinetics>
</comment>
<comment type="subcellular location">
    <subcellularLocation>
        <location evidence="1">Endoplasmic reticulum membrane</location>
        <topology evidence="1">Single-pass membrane protein</topology>
        <orientation evidence="1">Cytoplasmic side</orientation>
    </subcellularLocation>
</comment>
<comment type="alternative products">
    <event type="alternative splicing"/>
    <isoform>
        <id>Q9SUM3-1</id>
        <name>1</name>
        <sequence type="displayed"/>
    </isoform>
    <isoform>
        <id>Q9SUM3-2</id>
        <name>2</name>
        <sequence type="described" ref="VSP_042906"/>
    </isoform>
</comment>
<comment type="tissue specificity">
    <text evidence="4">Expressed in roots, leaves, stems, flowers and siliques.</text>
</comment>
<comment type="induction">
    <text evidence="4">By wounding and transition from dark to light.</text>
</comment>
<comment type="miscellaneous">
    <molecule>Isoform 2</molecule>
    <text evidence="7">May be due to a competing donor splice site.</text>
</comment>
<comment type="similarity">
    <text evidence="1">Belongs to the NADPH--cytochrome P450 reductase family.</text>
</comment>
<comment type="similarity">
    <text evidence="1">In the N-terminal section; belongs to the flavodoxin family.</text>
</comment>
<comment type="similarity">
    <text evidence="1">In the C-terminal section; belongs to the flavoprotein pyridine nucleotide cytochrome reductase family.</text>
</comment>
<keyword id="KW-0002">3D-structure</keyword>
<keyword id="KW-0025">Alternative splicing</keyword>
<keyword id="KW-0256">Endoplasmic reticulum</keyword>
<keyword id="KW-0274">FAD</keyword>
<keyword id="KW-0285">Flavoprotein</keyword>
<keyword id="KW-0288">FMN</keyword>
<keyword id="KW-0472">Membrane</keyword>
<keyword id="KW-0521">NADP</keyword>
<keyword id="KW-0560">Oxidoreductase</keyword>
<keyword id="KW-0587">Phenylpropanoid metabolism</keyword>
<keyword id="KW-1185">Reference proteome</keyword>
<keyword id="KW-0812">Transmembrane</keyword>
<keyword id="KW-1133">Transmembrane helix</keyword>
<accession>Q9SUM3</accession>
<accession>F4JPK2</accession>
<accession>Q39036</accession>
<proteinExistence type="evidence at protein level"/>
<sequence>MSSSSSSSTSMIDLMAAIIKGEPVIVSDPANASAYESVAAELSSMLIENRQFAMIVTTSIAVLIGCIVMLVWRRSGSGNSKRVEPLKPLVIKPREEEIDDGRKKVTIFFGTQTGTAEGFAKALGEEAKARYEKTRFKIVDLDDYAADDDEYEEKLKKEDVAFFFLATYGDGEPTDNAARFYKWFTEGNDRGEWLKNLKYGVFGLGNRQYEHFNKVAKVVDDILVEQGAQRLVQVGLGDDDQCIEDDFTAWREALWPELDTILREEGDTAVATPYTAAVLEYRVSIHDSEDAKFNDINMANGNGYTVFDAQHPYKANVAVKRELHTPESDRSCIHLEFDIAGSGLTYETGDHVGVLCDNLSETVDEALRLLDMSPDTYFSLHAEKEDGTPISSSLPPPFPPCNLRTALTRYACLLSSPKKSALVALAAHASDPTEAERLKHLASPAGKDEYSKWVVESQRSLLEVMAEFPSAKPPLGVFFAGVAPRLQPRFYSISSSPKIAETRIHVTCALVYEKMPTGRIHKGVCSTWMKNAVPYEKSENCSSAPIFVRQSNFKLPSDSKVPIIMIGPGTGLAPFRGFLQERLALVESGVELGPSVLFFGCRNRRMDFIYEEELQRFVESGALAELSVAFSREGPTKEYVQHKMMDKASDIWNMISQGAYLYVCGDAKGMARDVHRSLHTIAQEQGSMDSTKAEGFVKNLQTSGRYLRDVW</sequence>
<reference key="1">
    <citation type="journal article" date="1997" name="J. Biol. Chem.">
        <title>Cloning, yeast expression, and characterization of the coupling of two distantly related Arabidopsis thaliana NADPH-cytochrome P450 reductases with P450 CYP73A5.</title>
        <authorList>
            <person name="Urban P."/>
            <person name="Mignotte C."/>
            <person name="Kazmaier M."/>
            <person name="Delorme F."/>
            <person name="Pompon D."/>
        </authorList>
    </citation>
    <scope>NUCLEOTIDE SEQUENCE [MRNA] (ISOFORM 1)</scope>
    <scope>FUNCTION</scope>
    <source>
        <strain>cv. Landsberg erecta</strain>
    </source>
</reference>
<reference key="2">
    <citation type="journal article" date="1999" name="Nature">
        <title>Sequence and analysis of chromosome 4 of the plant Arabidopsis thaliana.</title>
        <authorList>
            <person name="Mayer K.F.X."/>
            <person name="Schueller C."/>
            <person name="Wambutt R."/>
            <person name="Murphy G."/>
            <person name="Volckaert G."/>
            <person name="Pohl T."/>
            <person name="Duesterhoeft A."/>
            <person name="Stiekema W."/>
            <person name="Entian K.-D."/>
            <person name="Terryn N."/>
            <person name="Harris B."/>
            <person name="Ansorge W."/>
            <person name="Brandt P."/>
            <person name="Grivell L.A."/>
            <person name="Rieger M."/>
            <person name="Weichselgartner M."/>
            <person name="de Simone V."/>
            <person name="Obermaier B."/>
            <person name="Mache R."/>
            <person name="Mueller M."/>
            <person name="Kreis M."/>
            <person name="Delseny M."/>
            <person name="Puigdomenech P."/>
            <person name="Watson M."/>
            <person name="Schmidtheini T."/>
            <person name="Reichert B."/>
            <person name="Portetelle D."/>
            <person name="Perez-Alonso M."/>
            <person name="Boutry M."/>
            <person name="Bancroft I."/>
            <person name="Vos P."/>
            <person name="Hoheisel J."/>
            <person name="Zimmermann W."/>
            <person name="Wedler H."/>
            <person name="Ridley P."/>
            <person name="Langham S.-A."/>
            <person name="McCullagh B."/>
            <person name="Bilham L."/>
            <person name="Robben J."/>
            <person name="van der Schueren J."/>
            <person name="Grymonprez B."/>
            <person name="Chuang Y.-J."/>
            <person name="Vandenbussche F."/>
            <person name="Braeken M."/>
            <person name="Weltjens I."/>
            <person name="Voet M."/>
            <person name="Bastiaens I."/>
            <person name="Aert R."/>
            <person name="Defoor E."/>
            <person name="Weitzenegger T."/>
            <person name="Bothe G."/>
            <person name="Ramsperger U."/>
            <person name="Hilbert H."/>
            <person name="Braun M."/>
            <person name="Holzer E."/>
            <person name="Brandt A."/>
            <person name="Peters S."/>
            <person name="van Staveren M."/>
            <person name="Dirkse W."/>
            <person name="Mooijman P."/>
            <person name="Klein Lankhorst R."/>
            <person name="Rose M."/>
            <person name="Hauf J."/>
            <person name="Koetter P."/>
            <person name="Berneiser S."/>
            <person name="Hempel S."/>
            <person name="Feldpausch M."/>
            <person name="Lamberth S."/>
            <person name="Van den Daele H."/>
            <person name="De Keyser A."/>
            <person name="Buysshaert C."/>
            <person name="Gielen J."/>
            <person name="Villarroel R."/>
            <person name="De Clercq R."/>
            <person name="van Montagu M."/>
            <person name="Rogers J."/>
            <person name="Cronin A."/>
            <person name="Quail M.A."/>
            <person name="Bray-Allen S."/>
            <person name="Clark L."/>
            <person name="Doggett J."/>
            <person name="Hall S."/>
            <person name="Kay M."/>
            <person name="Lennard N."/>
            <person name="McLay K."/>
            <person name="Mayes R."/>
            <person name="Pettett A."/>
            <person name="Rajandream M.A."/>
            <person name="Lyne M."/>
            <person name="Benes V."/>
            <person name="Rechmann S."/>
            <person name="Borkova D."/>
            <person name="Bloecker H."/>
            <person name="Scharfe M."/>
            <person name="Grimm M."/>
            <person name="Loehnert T.-H."/>
            <person name="Dose S."/>
            <person name="de Haan M."/>
            <person name="Maarse A.C."/>
            <person name="Schaefer M."/>
            <person name="Mueller-Auer S."/>
            <person name="Gabel C."/>
            <person name="Fuchs M."/>
            <person name="Fartmann B."/>
            <person name="Granderath K."/>
            <person name="Dauner D."/>
            <person name="Herzl A."/>
            <person name="Neumann S."/>
            <person name="Argiriou A."/>
            <person name="Vitale D."/>
            <person name="Liguori R."/>
            <person name="Piravandi E."/>
            <person name="Massenet O."/>
            <person name="Quigley F."/>
            <person name="Clabauld G."/>
            <person name="Muendlein A."/>
            <person name="Felber R."/>
            <person name="Schnabl S."/>
            <person name="Hiller R."/>
            <person name="Schmidt W."/>
            <person name="Lecharny A."/>
            <person name="Aubourg S."/>
            <person name="Chefdor F."/>
            <person name="Cooke R."/>
            <person name="Berger C."/>
            <person name="Monfort A."/>
            <person name="Casacuberta E."/>
            <person name="Gibbons T."/>
            <person name="Weber N."/>
            <person name="Vandenbol M."/>
            <person name="Bargues M."/>
            <person name="Terol J."/>
            <person name="Torres A."/>
            <person name="Perez-Perez A."/>
            <person name="Purnelle B."/>
            <person name="Bent E."/>
            <person name="Johnson S."/>
            <person name="Tacon D."/>
            <person name="Jesse T."/>
            <person name="Heijnen L."/>
            <person name="Schwarz S."/>
            <person name="Scholler P."/>
            <person name="Heber S."/>
            <person name="Francs P."/>
            <person name="Bielke C."/>
            <person name="Frishman D."/>
            <person name="Haase D."/>
            <person name="Lemcke K."/>
            <person name="Mewes H.-W."/>
            <person name="Stocker S."/>
            <person name="Zaccaria P."/>
            <person name="Bevan M."/>
            <person name="Wilson R.K."/>
            <person name="de la Bastide M."/>
            <person name="Habermann K."/>
            <person name="Parnell L."/>
            <person name="Dedhia N."/>
            <person name="Gnoj L."/>
            <person name="Schutz K."/>
            <person name="Huang E."/>
            <person name="Spiegel L."/>
            <person name="Sekhon M."/>
            <person name="Murray J."/>
            <person name="Sheet P."/>
            <person name="Cordes M."/>
            <person name="Abu-Threideh J."/>
            <person name="Stoneking T."/>
            <person name="Kalicki J."/>
            <person name="Graves T."/>
            <person name="Harmon G."/>
            <person name="Edwards J."/>
            <person name="Latreille P."/>
            <person name="Courtney L."/>
            <person name="Cloud J."/>
            <person name="Abbott A."/>
            <person name="Scott K."/>
            <person name="Johnson D."/>
            <person name="Minx P."/>
            <person name="Bentley D."/>
            <person name="Fulton B."/>
            <person name="Miller N."/>
            <person name="Greco T."/>
            <person name="Kemp K."/>
            <person name="Kramer J."/>
            <person name="Fulton L."/>
            <person name="Mardis E."/>
            <person name="Dante M."/>
            <person name="Pepin K."/>
            <person name="Hillier L.W."/>
            <person name="Nelson J."/>
            <person name="Spieth J."/>
            <person name="Ryan E."/>
            <person name="Andrews S."/>
            <person name="Geisel C."/>
            <person name="Layman D."/>
            <person name="Du H."/>
            <person name="Ali J."/>
            <person name="Berghoff A."/>
            <person name="Jones K."/>
            <person name="Drone K."/>
            <person name="Cotton M."/>
            <person name="Joshu C."/>
            <person name="Antonoiu B."/>
            <person name="Zidanic M."/>
            <person name="Strong C."/>
            <person name="Sun H."/>
            <person name="Lamar B."/>
            <person name="Yordan C."/>
            <person name="Ma P."/>
            <person name="Zhong J."/>
            <person name="Preston R."/>
            <person name="Vil D."/>
            <person name="Shekher M."/>
            <person name="Matero A."/>
            <person name="Shah R."/>
            <person name="Swaby I.K."/>
            <person name="O'Shaughnessy A."/>
            <person name="Rodriguez M."/>
            <person name="Hoffman J."/>
            <person name="Till S."/>
            <person name="Granat S."/>
            <person name="Shohdy N."/>
            <person name="Hasegawa A."/>
            <person name="Hameed A."/>
            <person name="Lodhi M."/>
            <person name="Johnson A."/>
            <person name="Chen E."/>
            <person name="Marra M.A."/>
            <person name="Martienssen R."/>
            <person name="McCombie W.R."/>
        </authorList>
    </citation>
    <scope>NUCLEOTIDE SEQUENCE [LARGE SCALE GENOMIC DNA]</scope>
    <source>
        <strain>cv. Columbia</strain>
    </source>
</reference>
<reference key="3">
    <citation type="journal article" date="2017" name="Plant J.">
        <title>Araport11: a complete reannotation of the Arabidopsis thaliana reference genome.</title>
        <authorList>
            <person name="Cheng C.Y."/>
            <person name="Krishnakumar V."/>
            <person name="Chan A.P."/>
            <person name="Thibaud-Nissen F."/>
            <person name="Schobel S."/>
            <person name="Town C.D."/>
        </authorList>
    </citation>
    <scope>GENOME REANNOTATION</scope>
    <source>
        <strain>cv. Columbia</strain>
    </source>
</reference>
<reference key="4">
    <citation type="journal article" date="2003" name="Science">
        <title>Empirical analysis of transcriptional activity in the Arabidopsis genome.</title>
        <authorList>
            <person name="Yamada K."/>
            <person name="Lim J."/>
            <person name="Dale J.M."/>
            <person name="Chen H."/>
            <person name="Shinn P."/>
            <person name="Palm C.J."/>
            <person name="Southwick A.M."/>
            <person name="Wu H.C."/>
            <person name="Kim C.J."/>
            <person name="Nguyen M."/>
            <person name="Pham P.K."/>
            <person name="Cheuk R.F."/>
            <person name="Karlin-Newmann G."/>
            <person name="Liu S.X."/>
            <person name="Lam B."/>
            <person name="Sakano H."/>
            <person name="Wu T."/>
            <person name="Yu G."/>
            <person name="Miranda M."/>
            <person name="Quach H.L."/>
            <person name="Tripp M."/>
            <person name="Chang C.H."/>
            <person name="Lee J.M."/>
            <person name="Toriumi M.J."/>
            <person name="Chan M.M."/>
            <person name="Tang C.C."/>
            <person name="Onodera C.S."/>
            <person name="Deng J.M."/>
            <person name="Akiyama K."/>
            <person name="Ansari Y."/>
            <person name="Arakawa T."/>
            <person name="Banh J."/>
            <person name="Banno F."/>
            <person name="Bowser L."/>
            <person name="Brooks S.Y."/>
            <person name="Carninci P."/>
            <person name="Chao Q."/>
            <person name="Choy N."/>
            <person name="Enju A."/>
            <person name="Goldsmith A.D."/>
            <person name="Gurjal M."/>
            <person name="Hansen N.F."/>
            <person name="Hayashizaki Y."/>
            <person name="Johnson-Hopson C."/>
            <person name="Hsuan V.W."/>
            <person name="Iida K."/>
            <person name="Karnes M."/>
            <person name="Khan S."/>
            <person name="Koesema E."/>
            <person name="Ishida J."/>
            <person name="Jiang P.X."/>
            <person name="Jones T."/>
            <person name="Kawai J."/>
            <person name="Kamiya A."/>
            <person name="Meyers C."/>
            <person name="Nakajima M."/>
            <person name="Narusaka M."/>
            <person name="Seki M."/>
            <person name="Sakurai T."/>
            <person name="Satou M."/>
            <person name="Tamse R."/>
            <person name="Vaysberg M."/>
            <person name="Wallender E.K."/>
            <person name="Wong C."/>
            <person name="Yamamura Y."/>
            <person name="Yuan S."/>
            <person name="Shinozaki K."/>
            <person name="Davis R.W."/>
            <person name="Theologis A."/>
            <person name="Ecker J.R."/>
        </authorList>
    </citation>
    <scope>NUCLEOTIDE SEQUENCE [LARGE SCALE MRNA] (ISOFORM 1)</scope>
    <source>
        <strain>cv. Columbia</strain>
    </source>
</reference>
<reference key="5">
    <citation type="journal article" date="1998" name="Eur. J. Biochem.">
        <title>Differential redox and electron-transfer properties of purified yeast, plant and human NADPH-cytochrome P-450 reductases highly modulate cytochrome P-450 activities.</title>
        <authorList>
            <person name="Louerat-Oriou B."/>
            <person name="Perret A."/>
            <person name="Pompon D."/>
        </authorList>
    </citation>
    <scope>FUNCTION</scope>
    <scope>BIOPHYSICOCHEMICAL PROPERTIES</scope>
    <scope>COFACTOR</scope>
</reference>
<reference key="6">
    <citation type="journal article" date="1998" name="Plant Physiol.">
        <title>Two isoforms of NADPH:cytochrome P450 reductase in Arabidopsis thaliana. Gene structure, heterologous expression in insect cells, and differential regulation.</title>
        <authorList>
            <person name="Mizutani M."/>
            <person name="Ohta D."/>
        </authorList>
    </citation>
    <scope>FUNCTION</scope>
    <scope>BIOPHYSICOCHEMICAL PROPERTIES</scope>
    <scope>TISSUE SPECIFICITY</scope>
    <scope>INDUCTION</scope>
</reference>
<reference key="7">
    <citation type="journal article" date="1999" name="Plant Physiol.">
        <title>Microsomal electron transfer in higher plants: cloning and heterologous expression of NADH-cytochrome b5 reductase from Arabidopsis.</title>
        <authorList>
            <person name="Fukuchi-Mizutani M."/>
            <person name="Mizutani M."/>
            <person name="Tanaka Y."/>
            <person name="Kusumi T."/>
            <person name="Ohta D."/>
        </authorList>
    </citation>
    <scope>FUNCTION</scope>
    <scope>BIOPHYSICOCHEMICAL PROPERTIES</scope>
</reference>
<reference key="8">
    <citation type="journal article" date="2000" name="Protein Expr. Purif.">
        <title>Bacterial expression and purification of the Arabidopsis NADPH-cytochrome P450 reductase ATR2.</title>
        <authorList>
            <person name="Hull A.K."/>
            <person name="Celenza J.L."/>
        </authorList>
    </citation>
    <scope>FUNCTION</scope>
    <scope>BIOPHYSICOCHEMICAL PROPERTIES</scope>
</reference>
<reference key="9">
    <citation type="journal article" date="2009" name="J. Proteomics">
        <title>Phosphoproteomic analysis of nuclei-enriched fractions from Arabidopsis thaliana.</title>
        <authorList>
            <person name="Jones A.M.E."/>
            <person name="MacLean D."/>
            <person name="Studholme D.J."/>
            <person name="Serna-Sanz A."/>
            <person name="Andreasson E."/>
            <person name="Rathjen J.P."/>
            <person name="Peck S.C."/>
        </authorList>
    </citation>
    <scope>IDENTIFICATION BY MASS SPECTROMETRY [LARGE SCALE ANALYSIS]</scope>
    <source>
        <strain>cv. Columbia</strain>
    </source>
</reference>